<comment type="function">
    <text evidence="3">Terpene synthase (TPS) involved in defensive oleoresin formation in conifers in response to insect attack (e.g. white pine weevil P.strobi) or other injury. Produces (+)-sabinene from geranyl diphosphate, but has no activity with geranylgeranyl diphosphate or farnesyl diphosphate.</text>
</comment>
<comment type="catalytic activity">
    <reaction evidence="3">
        <text>(2E)-geranyl diphosphate = (1R,5R)-sabinene + diphosphate</text>
        <dbReference type="Rhea" id="RHEA:32547"/>
        <dbReference type="ChEBI" id="CHEBI:33019"/>
        <dbReference type="ChEBI" id="CHEBI:50029"/>
        <dbReference type="ChEBI" id="CHEBI:58057"/>
        <dbReference type="EC" id="4.2.3.110"/>
    </reaction>
</comment>
<comment type="cofactor">
    <cofactor evidence="1">
        <name>Mg(2+)</name>
        <dbReference type="ChEBI" id="CHEBI:18420"/>
    </cofactor>
    <text evidence="1">Binds 3 Mg(2+) ions per subunit.</text>
</comment>
<comment type="biophysicochemical properties">
    <kinetics>
        <KM evidence="3">3.59 uM for geranyl diphosphate</KM>
        <Vmax evidence="3">13.5 pmol/sec/ug enzyme</Vmax>
        <text>kcat is 0.89 sec(-1) with geranyl diphosphate as substrate.</text>
    </kinetics>
</comment>
<comment type="pathway">
    <text>Terpene metabolism; oleoresin biosynthesis.</text>
</comment>
<comment type="subunit">
    <text evidence="1">Monomer.</text>
</comment>
<comment type="subcellular location">
    <subcellularLocation>
        <location evidence="4">Plastid</location>
        <location evidence="4">Chloroplast</location>
    </subcellularLocation>
</comment>
<comment type="induction">
    <text evidence="3">Up-regulated by methyl jasmonate.</text>
</comment>
<comment type="domain">
    <text evidence="1">The Asp-Asp-Xaa-Xaa-Asp/Glu (DDXXD/E) motif is important for the catalytic activity, presumably through binding to Mg(2+).</text>
</comment>
<comment type="miscellaneous">
    <text>The highly resistant (H898) genotype and the highly susceptible (Q903) genotype differ in the nature and amount of the various terpenoids found in oleoresin.</text>
</comment>
<comment type="similarity">
    <text evidence="4">Belongs to the terpene synthase family. Tpsd subfamily.</text>
</comment>
<accession>F1CKJ1</accession>
<accession>F1CKJ2</accession>
<dbReference type="EC" id="4.2.3.110"/>
<dbReference type="EMBL" id="HQ336803">
    <property type="protein sequence ID" value="ADU85929.1"/>
    <property type="molecule type" value="mRNA"/>
</dbReference>
<dbReference type="EMBL" id="HQ336804">
    <property type="protein sequence ID" value="ADU85930.1"/>
    <property type="molecule type" value="mRNA"/>
</dbReference>
<dbReference type="SMR" id="F1CKJ1"/>
<dbReference type="BRENDA" id="4.2.3.110">
    <property type="organism ID" value="8974"/>
</dbReference>
<dbReference type="BRENDA" id="4.2.3.113">
    <property type="organism ID" value="8974"/>
</dbReference>
<dbReference type="SABIO-RK" id="F1CKJ1"/>
<dbReference type="UniPathway" id="UPA00924"/>
<dbReference type="GO" id="GO:0009507">
    <property type="term" value="C:chloroplast"/>
    <property type="evidence" value="ECO:0007669"/>
    <property type="project" value="UniProtKB-SubCell"/>
</dbReference>
<dbReference type="GO" id="GO:0000287">
    <property type="term" value="F:magnesium ion binding"/>
    <property type="evidence" value="ECO:0007669"/>
    <property type="project" value="InterPro"/>
</dbReference>
<dbReference type="GO" id="GO:0010333">
    <property type="term" value="F:terpene synthase activity"/>
    <property type="evidence" value="ECO:0007669"/>
    <property type="project" value="InterPro"/>
</dbReference>
<dbReference type="GO" id="GO:0016102">
    <property type="term" value="P:diterpenoid biosynthetic process"/>
    <property type="evidence" value="ECO:0007669"/>
    <property type="project" value="InterPro"/>
</dbReference>
<dbReference type="CDD" id="cd00684">
    <property type="entry name" value="Terpene_cyclase_plant_C1"/>
    <property type="match status" value="1"/>
</dbReference>
<dbReference type="FunFam" id="1.50.10.130:FF:000004">
    <property type="entry name" value="Carene synthase, chloroplastic"/>
    <property type="match status" value="1"/>
</dbReference>
<dbReference type="FunFam" id="1.10.600.10:FF:000005">
    <property type="entry name" value="Ent-kaur-16-ene synthase, chloroplastic"/>
    <property type="match status" value="1"/>
</dbReference>
<dbReference type="Gene3D" id="1.10.600.10">
    <property type="entry name" value="Farnesyl Diphosphate Synthase"/>
    <property type="match status" value="1"/>
</dbReference>
<dbReference type="Gene3D" id="1.50.10.130">
    <property type="entry name" value="Terpene synthase, N-terminal domain"/>
    <property type="match status" value="1"/>
</dbReference>
<dbReference type="InterPro" id="IPR008949">
    <property type="entry name" value="Isoprenoid_synthase_dom_sf"/>
</dbReference>
<dbReference type="InterPro" id="IPR034741">
    <property type="entry name" value="Terpene_cyclase-like_1_C"/>
</dbReference>
<dbReference type="InterPro" id="IPR044814">
    <property type="entry name" value="Terpene_cyclase_plant_C1"/>
</dbReference>
<dbReference type="InterPro" id="IPR001906">
    <property type="entry name" value="Terpene_synth_N"/>
</dbReference>
<dbReference type="InterPro" id="IPR036965">
    <property type="entry name" value="Terpene_synth_N_sf"/>
</dbReference>
<dbReference type="InterPro" id="IPR050148">
    <property type="entry name" value="Terpene_synthase-like"/>
</dbReference>
<dbReference type="InterPro" id="IPR005630">
    <property type="entry name" value="Terpene_synthase_metal-bd"/>
</dbReference>
<dbReference type="InterPro" id="IPR008930">
    <property type="entry name" value="Terpenoid_cyclase/PrenylTrfase"/>
</dbReference>
<dbReference type="PANTHER" id="PTHR31739:SF25">
    <property type="entry name" value="(E,E)-GERANYLLINALOOL SYNTHASE"/>
    <property type="match status" value="1"/>
</dbReference>
<dbReference type="PANTHER" id="PTHR31739">
    <property type="entry name" value="ENT-COPALYL DIPHOSPHATE SYNTHASE, CHLOROPLASTIC"/>
    <property type="match status" value="1"/>
</dbReference>
<dbReference type="Pfam" id="PF01397">
    <property type="entry name" value="Terpene_synth"/>
    <property type="match status" value="1"/>
</dbReference>
<dbReference type="Pfam" id="PF03936">
    <property type="entry name" value="Terpene_synth_C"/>
    <property type="match status" value="1"/>
</dbReference>
<dbReference type="SFLD" id="SFLDS00005">
    <property type="entry name" value="Isoprenoid_Synthase_Type_I"/>
    <property type="match status" value="1"/>
</dbReference>
<dbReference type="SFLD" id="SFLDG01019">
    <property type="entry name" value="Terpene_Cyclase_Like_1_C_Termi"/>
    <property type="match status" value="1"/>
</dbReference>
<dbReference type="SFLD" id="SFLDG01014">
    <property type="entry name" value="Terpene_Cyclase_Like_1_N-term"/>
    <property type="match status" value="1"/>
</dbReference>
<dbReference type="SUPFAM" id="SSF48239">
    <property type="entry name" value="Terpenoid cyclases/Protein prenyltransferases"/>
    <property type="match status" value="1"/>
</dbReference>
<dbReference type="SUPFAM" id="SSF48576">
    <property type="entry name" value="Terpenoid synthases"/>
    <property type="match status" value="1"/>
</dbReference>
<keyword id="KW-0150">Chloroplast</keyword>
<keyword id="KW-0456">Lyase</keyword>
<keyword id="KW-0460">Magnesium</keyword>
<keyword id="KW-0464">Manganese</keyword>
<keyword id="KW-0479">Metal-binding</keyword>
<keyword id="KW-0934">Plastid</keyword>
<keyword id="KW-0809">Transit peptide</keyword>
<proteinExistence type="evidence at protein level"/>
<gene>
    <name type="primary">TPS-sab</name>
</gene>
<sequence length="627" mass="71795">MSVISIVPLASNSCLYKSLMSSTHELKALCRPIATLGMCRRGKSVMASMSTSLTTAVSDDGVQRRIGHHHSNLWDDNFIQSLSSPYGASSYAESAKKLIGEVKEIFNSLSMAAGGLMSPVDDLLQHLSMVDNVERLGIDRHFQTEIKVSLDYVYSYWSEKGIGSGRDIVCTDLNTTALGFRILRLHGYTVFPDVFEHFKDQMGRIACSANHTERQISSILNLFRASLIAFPGEKVMEEAEIFSATYLKEALQTIPVSSLSQEMQYVLDYRWHSNLPRLETRTYIDILGETTINQMQDVNIQKLLELAKLEFNIFHSIQQNELKCISRWWKESGSPELTFIRHRHIEFYTLASGIDMEPKHSAFRLSFVKMCHLITVLDDIYDTFGTMDELRLFTSAVKRWDRSEIECLPEYMKGVYIILYETVNEMAREARKSQGRDTLNYARLALEEYIGAYLKEAEWISMGYLPTFEEYFKNGKVSSGHRIATLQPILTLDIPFPHHILQEIDFPSKFNELACSILRLRGDTRCYQADRDRGEKASCISCYMKDNPGSTEEDALNHINGMIEDTIKQLNWELLRPDNNVPISSKKHSFDISRAFHHLYRYRDGYTVSSNETKNLVVRTVLEPLPM</sequence>
<organism>
    <name type="scientific">Picea sitchensis</name>
    <name type="common">Sitka spruce</name>
    <name type="synonym">Pinus sitchensis</name>
    <dbReference type="NCBI Taxonomy" id="3332"/>
    <lineage>
        <taxon>Eukaryota</taxon>
        <taxon>Viridiplantae</taxon>
        <taxon>Streptophyta</taxon>
        <taxon>Embryophyta</taxon>
        <taxon>Tracheophyta</taxon>
        <taxon>Spermatophyta</taxon>
        <taxon>Pinopsida</taxon>
        <taxon>Pinidae</taxon>
        <taxon>Conifers I</taxon>
        <taxon>Pinales</taxon>
        <taxon>Pinaceae</taxon>
        <taxon>Picea</taxon>
    </lineage>
</organism>
<evidence type="ECO:0000250" key="1"/>
<evidence type="ECO:0000255" key="2"/>
<evidence type="ECO:0000269" key="3">
    <source>
    </source>
</evidence>
<evidence type="ECO:0000305" key="4"/>
<feature type="transit peptide" description="Chloroplast" evidence="2">
    <location>
        <begin position="1"/>
        <end position="46"/>
    </location>
</feature>
<feature type="chain" id="PRO_0000419747" description="(+)-sabinene synthase, chloroplastic">
    <location>
        <begin position="47"/>
        <end position="627"/>
    </location>
</feature>
<feature type="short sequence motif" description="DDXXD motif">
    <location>
        <begin position="378"/>
        <end position="382"/>
    </location>
</feature>
<feature type="binding site" evidence="1">
    <location>
        <position position="378"/>
    </location>
    <ligand>
        <name>Mg(2+)</name>
        <dbReference type="ChEBI" id="CHEBI:18420"/>
        <label>1</label>
    </ligand>
</feature>
<feature type="binding site" evidence="1">
    <location>
        <position position="378"/>
    </location>
    <ligand>
        <name>Mg(2+)</name>
        <dbReference type="ChEBI" id="CHEBI:18420"/>
        <label>2</label>
    </ligand>
</feature>
<feature type="binding site" evidence="1">
    <location>
        <position position="382"/>
    </location>
    <ligand>
        <name>Mg(2+)</name>
        <dbReference type="ChEBI" id="CHEBI:18420"/>
        <label>1</label>
    </ligand>
</feature>
<feature type="binding site" evidence="1">
    <location>
        <position position="382"/>
    </location>
    <ligand>
        <name>Mg(2+)</name>
        <dbReference type="ChEBI" id="CHEBI:18420"/>
        <label>2</label>
    </ligand>
</feature>
<feature type="binding site" evidence="1">
    <location>
        <position position="530"/>
    </location>
    <ligand>
        <name>Mg(2+)</name>
        <dbReference type="ChEBI" id="CHEBI:18420"/>
        <label>3</label>
    </ligand>
</feature>
<feature type="sequence variant" description="In strain: Q903; susceptible.">
    <original>E</original>
    <variation>D</variation>
    <location>
        <position position="448"/>
    </location>
</feature>
<feature type="sequence variant" description="In strain: Q903; susceptible.">
    <original>G</original>
    <variation>V</variation>
    <location>
        <position position="463"/>
    </location>
</feature>
<reference key="1">
    <citation type="journal article" date="2011" name="Plant J.">
        <title>An integrated genomic, proteomic and biochemical analysis of (+)-3-carene biosynthesis in Sitka spruce (Picea sitchensis) genotypes that are resistant or susceptible to white pine weevil.</title>
        <authorList>
            <person name="Hall D.E."/>
            <person name="Robert J.A."/>
            <person name="Keeling C.I."/>
            <person name="Domanski D."/>
            <person name="Quesada A.L."/>
            <person name="Jancsik S."/>
            <person name="Kuzyk M.A."/>
            <person name="Hamberger B."/>
            <person name="Borchers C.H."/>
            <person name="Bohlmann J."/>
        </authorList>
    </citation>
    <scope>NUCLEOTIDE SEQUENCE [MRNA]</scope>
    <scope>FUNCTION</scope>
    <scope>CATALYTIC ACTIVITY</scope>
    <scope>BIOPHYSICOCHEMICAL PROPERTIES</scope>
    <scope>INDUCTION BY METHYL JASMONATE</scope>
    <source>
        <strain>H898</strain>
        <strain>Q903</strain>
    </source>
</reference>
<name>SSS_PICSI</name>
<protein>
    <recommendedName>
        <fullName>(+)-sabinene synthase, chloroplastic</fullName>
        <shortName>SSS</shortName>
        <ecNumber>4.2.3.110</ecNumber>
    </recommendedName>
</protein>